<gene>
    <name evidence="1" type="primary">hfq</name>
    <name type="ordered locus">XAC1735</name>
</gene>
<reference key="1">
    <citation type="journal article" date="2002" name="Nature">
        <title>Comparison of the genomes of two Xanthomonas pathogens with differing host specificities.</title>
        <authorList>
            <person name="da Silva A.C.R."/>
            <person name="Ferro J.A."/>
            <person name="Reinach F.C."/>
            <person name="Farah C.S."/>
            <person name="Furlan L.R."/>
            <person name="Quaggio R.B."/>
            <person name="Monteiro-Vitorello C.B."/>
            <person name="Van Sluys M.A."/>
            <person name="Almeida N.F. Jr."/>
            <person name="Alves L.M.C."/>
            <person name="do Amaral A.M."/>
            <person name="Bertolini M.C."/>
            <person name="Camargo L.E.A."/>
            <person name="Camarotte G."/>
            <person name="Cannavan F."/>
            <person name="Cardozo J."/>
            <person name="Chambergo F."/>
            <person name="Ciapina L.P."/>
            <person name="Cicarelli R.M.B."/>
            <person name="Coutinho L.L."/>
            <person name="Cursino-Santos J.R."/>
            <person name="El-Dorry H."/>
            <person name="Faria J.B."/>
            <person name="Ferreira A.J.S."/>
            <person name="Ferreira R.C.C."/>
            <person name="Ferro M.I.T."/>
            <person name="Formighieri E.F."/>
            <person name="Franco M.C."/>
            <person name="Greggio C.C."/>
            <person name="Gruber A."/>
            <person name="Katsuyama A.M."/>
            <person name="Kishi L.T."/>
            <person name="Leite R.P."/>
            <person name="Lemos E.G.M."/>
            <person name="Lemos M.V.F."/>
            <person name="Locali E.C."/>
            <person name="Machado M.A."/>
            <person name="Madeira A.M.B.N."/>
            <person name="Martinez-Rossi N.M."/>
            <person name="Martins E.C."/>
            <person name="Meidanis J."/>
            <person name="Menck C.F.M."/>
            <person name="Miyaki C.Y."/>
            <person name="Moon D.H."/>
            <person name="Moreira L.M."/>
            <person name="Novo M.T.M."/>
            <person name="Okura V.K."/>
            <person name="Oliveira M.C."/>
            <person name="Oliveira V.R."/>
            <person name="Pereira H.A."/>
            <person name="Rossi A."/>
            <person name="Sena J.A.D."/>
            <person name="Silva C."/>
            <person name="de Souza R.F."/>
            <person name="Spinola L.A.F."/>
            <person name="Takita M.A."/>
            <person name="Tamura R.E."/>
            <person name="Teixeira E.C."/>
            <person name="Tezza R.I.D."/>
            <person name="Trindade dos Santos M."/>
            <person name="Truffi D."/>
            <person name="Tsai S.M."/>
            <person name="White F.F."/>
            <person name="Setubal J.C."/>
            <person name="Kitajima J.P."/>
        </authorList>
    </citation>
    <scope>NUCLEOTIDE SEQUENCE [LARGE SCALE GENOMIC DNA]</scope>
    <source>
        <strain>306</strain>
    </source>
</reference>
<name>HFQ_XANAC</name>
<accession>Q8PLQ4</accession>
<protein>
    <recommendedName>
        <fullName evidence="1">RNA-binding protein Hfq</fullName>
    </recommendedName>
</protein>
<sequence length="92" mass="10146">MAKGQSLQDPFLNALRRERVPVSVYLVNGIKLQGTIESFDQFVVLLRNTVSQMVYKHAISTVVPARNVRVGPGGGYVQSNEGNQAEDDDVEQ</sequence>
<proteinExistence type="inferred from homology"/>
<dbReference type="EMBL" id="AE008923">
    <property type="protein sequence ID" value="AAM36602.1"/>
    <property type="molecule type" value="Genomic_DNA"/>
</dbReference>
<dbReference type="RefSeq" id="WP_005915027.1">
    <property type="nucleotide sequence ID" value="NC_003919.1"/>
</dbReference>
<dbReference type="SMR" id="Q8PLQ4"/>
<dbReference type="GeneID" id="97510110"/>
<dbReference type="KEGG" id="xac:XAC1735"/>
<dbReference type="eggNOG" id="COG1923">
    <property type="taxonomic scope" value="Bacteria"/>
</dbReference>
<dbReference type="HOGENOM" id="CLU_113688_2_0_6"/>
<dbReference type="Proteomes" id="UP000000576">
    <property type="component" value="Chromosome"/>
</dbReference>
<dbReference type="GO" id="GO:0005829">
    <property type="term" value="C:cytosol"/>
    <property type="evidence" value="ECO:0007669"/>
    <property type="project" value="TreeGrafter"/>
</dbReference>
<dbReference type="GO" id="GO:0003723">
    <property type="term" value="F:RNA binding"/>
    <property type="evidence" value="ECO:0007669"/>
    <property type="project" value="UniProtKB-UniRule"/>
</dbReference>
<dbReference type="GO" id="GO:0006355">
    <property type="term" value="P:regulation of DNA-templated transcription"/>
    <property type="evidence" value="ECO:0007669"/>
    <property type="project" value="InterPro"/>
</dbReference>
<dbReference type="GO" id="GO:0043487">
    <property type="term" value="P:regulation of RNA stability"/>
    <property type="evidence" value="ECO:0007669"/>
    <property type="project" value="TreeGrafter"/>
</dbReference>
<dbReference type="GO" id="GO:0045974">
    <property type="term" value="P:regulation of translation, ncRNA-mediated"/>
    <property type="evidence" value="ECO:0007669"/>
    <property type="project" value="TreeGrafter"/>
</dbReference>
<dbReference type="CDD" id="cd01716">
    <property type="entry name" value="Hfq"/>
    <property type="match status" value="1"/>
</dbReference>
<dbReference type="FunFam" id="2.30.30.100:FF:000001">
    <property type="entry name" value="RNA-binding protein Hfq"/>
    <property type="match status" value="1"/>
</dbReference>
<dbReference type="Gene3D" id="2.30.30.100">
    <property type="match status" value="1"/>
</dbReference>
<dbReference type="HAMAP" id="MF_00436">
    <property type="entry name" value="Hfq"/>
    <property type="match status" value="1"/>
</dbReference>
<dbReference type="InterPro" id="IPR005001">
    <property type="entry name" value="Hfq"/>
</dbReference>
<dbReference type="InterPro" id="IPR010920">
    <property type="entry name" value="LSM_dom_sf"/>
</dbReference>
<dbReference type="InterPro" id="IPR047575">
    <property type="entry name" value="Sm"/>
</dbReference>
<dbReference type="NCBIfam" id="TIGR02383">
    <property type="entry name" value="Hfq"/>
    <property type="match status" value="1"/>
</dbReference>
<dbReference type="NCBIfam" id="NF001602">
    <property type="entry name" value="PRK00395.1"/>
    <property type="match status" value="1"/>
</dbReference>
<dbReference type="PANTHER" id="PTHR34772">
    <property type="entry name" value="RNA-BINDING PROTEIN HFQ"/>
    <property type="match status" value="1"/>
</dbReference>
<dbReference type="PANTHER" id="PTHR34772:SF1">
    <property type="entry name" value="RNA-BINDING PROTEIN HFQ"/>
    <property type="match status" value="1"/>
</dbReference>
<dbReference type="Pfam" id="PF17209">
    <property type="entry name" value="Hfq"/>
    <property type="match status" value="1"/>
</dbReference>
<dbReference type="SUPFAM" id="SSF50182">
    <property type="entry name" value="Sm-like ribonucleoproteins"/>
    <property type="match status" value="1"/>
</dbReference>
<dbReference type="PROSITE" id="PS52002">
    <property type="entry name" value="SM"/>
    <property type="match status" value="1"/>
</dbReference>
<feature type="chain" id="PRO_0000095671" description="RNA-binding protein Hfq">
    <location>
        <begin position="1"/>
        <end position="92"/>
    </location>
</feature>
<feature type="domain" description="Sm" evidence="2">
    <location>
        <begin position="9"/>
        <end position="68"/>
    </location>
</feature>
<feature type="region of interest" description="Disordered" evidence="3">
    <location>
        <begin position="73"/>
        <end position="92"/>
    </location>
</feature>
<evidence type="ECO:0000255" key="1">
    <source>
        <dbReference type="HAMAP-Rule" id="MF_00436"/>
    </source>
</evidence>
<evidence type="ECO:0000255" key="2">
    <source>
        <dbReference type="PROSITE-ProRule" id="PRU01346"/>
    </source>
</evidence>
<evidence type="ECO:0000256" key="3">
    <source>
        <dbReference type="SAM" id="MobiDB-lite"/>
    </source>
</evidence>
<keyword id="KW-0694">RNA-binding</keyword>
<keyword id="KW-0346">Stress response</keyword>
<organism>
    <name type="scientific">Xanthomonas axonopodis pv. citri (strain 306)</name>
    <dbReference type="NCBI Taxonomy" id="190486"/>
    <lineage>
        <taxon>Bacteria</taxon>
        <taxon>Pseudomonadati</taxon>
        <taxon>Pseudomonadota</taxon>
        <taxon>Gammaproteobacteria</taxon>
        <taxon>Lysobacterales</taxon>
        <taxon>Lysobacteraceae</taxon>
        <taxon>Xanthomonas</taxon>
    </lineage>
</organism>
<comment type="function">
    <text evidence="1">RNA chaperone that binds small regulatory RNA (sRNAs) and mRNAs to facilitate mRNA translational regulation in response to envelope stress, environmental stress and changes in metabolite concentrations. Also binds with high specificity to tRNAs.</text>
</comment>
<comment type="subunit">
    <text evidence="1">Homohexamer.</text>
</comment>
<comment type="similarity">
    <text evidence="1">Belongs to the Hfq family.</text>
</comment>